<feature type="chain" id="PRO_1000165967" description="Large ribosomal subunit protein uL24">
    <location>
        <begin position="1"/>
        <end position="101"/>
    </location>
</feature>
<accession>B9DSW1</accession>
<name>RL24_STRU0</name>
<sequence>MFVKKGDKVRVIAGKDKGTEAVVLKALPKVNKVVVEGVGMIKKHQKPNAENPQGAIVEKEAPIHVSNVQVLDKNGVAGRVGYKVVDGKKVRYSKKSGEVLD</sequence>
<gene>
    <name evidence="1" type="primary">rplX</name>
    <name type="ordered locus">SUB0079</name>
</gene>
<reference key="1">
    <citation type="journal article" date="2009" name="BMC Genomics">
        <title>Evidence for niche adaptation in the genome of the bovine pathogen Streptococcus uberis.</title>
        <authorList>
            <person name="Ward P.N."/>
            <person name="Holden M.T.G."/>
            <person name="Leigh J.A."/>
            <person name="Lennard N."/>
            <person name="Bignell A."/>
            <person name="Barron A."/>
            <person name="Clark L."/>
            <person name="Quail M.A."/>
            <person name="Woodward J."/>
            <person name="Barrell B.G."/>
            <person name="Egan S.A."/>
            <person name="Field T.R."/>
            <person name="Maskell D."/>
            <person name="Kehoe M."/>
            <person name="Dowson C.G."/>
            <person name="Chanter N."/>
            <person name="Whatmore A.M."/>
            <person name="Bentley S.D."/>
            <person name="Parkhill J."/>
        </authorList>
    </citation>
    <scope>NUCLEOTIDE SEQUENCE [LARGE SCALE GENOMIC DNA]</scope>
    <source>
        <strain>ATCC BAA-854 / 0140J</strain>
    </source>
</reference>
<evidence type="ECO:0000255" key="1">
    <source>
        <dbReference type="HAMAP-Rule" id="MF_01326"/>
    </source>
</evidence>
<evidence type="ECO:0000305" key="2"/>
<proteinExistence type="inferred from homology"/>
<organism>
    <name type="scientific">Streptococcus uberis (strain ATCC BAA-854 / 0140J)</name>
    <dbReference type="NCBI Taxonomy" id="218495"/>
    <lineage>
        <taxon>Bacteria</taxon>
        <taxon>Bacillati</taxon>
        <taxon>Bacillota</taxon>
        <taxon>Bacilli</taxon>
        <taxon>Lactobacillales</taxon>
        <taxon>Streptococcaceae</taxon>
        <taxon>Streptococcus</taxon>
    </lineage>
</organism>
<protein>
    <recommendedName>
        <fullName evidence="1">Large ribosomal subunit protein uL24</fullName>
    </recommendedName>
    <alternativeName>
        <fullName evidence="2">50S ribosomal protein L24</fullName>
    </alternativeName>
</protein>
<keyword id="KW-1185">Reference proteome</keyword>
<keyword id="KW-0687">Ribonucleoprotein</keyword>
<keyword id="KW-0689">Ribosomal protein</keyword>
<keyword id="KW-0694">RNA-binding</keyword>
<keyword id="KW-0699">rRNA-binding</keyword>
<comment type="function">
    <text evidence="1">One of two assembly initiator proteins, it binds directly to the 5'-end of the 23S rRNA, where it nucleates assembly of the 50S subunit.</text>
</comment>
<comment type="function">
    <text evidence="1">One of the proteins that surrounds the polypeptide exit tunnel on the outside of the subunit.</text>
</comment>
<comment type="subunit">
    <text evidence="1">Part of the 50S ribosomal subunit.</text>
</comment>
<comment type="similarity">
    <text evidence="1">Belongs to the universal ribosomal protein uL24 family.</text>
</comment>
<dbReference type="EMBL" id="AM946015">
    <property type="protein sequence ID" value="CAR40457.1"/>
    <property type="molecule type" value="Genomic_DNA"/>
</dbReference>
<dbReference type="RefSeq" id="WP_012657641.1">
    <property type="nucleotide sequence ID" value="NC_012004.1"/>
</dbReference>
<dbReference type="SMR" id="B9DSW1"/>
<dbReference type="STRING" id="218495.SUB0079"/>
<dbReference type="GeneID" id="93825305"/>
<dbReference type="KEGG" id="sub:SUB0079"/>
<dbReference type="eggNOG" id="COG0198">
    <property type="taxonomic scope" value="Bacteria"/>
</dbReference>
<dbReference type="HOGENOM" id="CLU_093315_2_0_9"/>
<dbReference type="OrthoDB" id="9807419at2"/>
<dbReference type="Proteomes" id="UP000000449">
    <property type="component" value="Chromosome"/>
</dbReference>
<dbReference type="GO" id="GO:1990904">
    <property type="term" value="C:ribonucleoprotein complex"/>
    <property type="evidence" value="ECO:0007669"/>
    <property type="project" value="UniProtKB-KW"/>
</dbReference>
<dbReference type="GO" id="GO:0005840">
    <property type="term" value="C:ribosome"/>
    <property type="evidence" value="ECO:0007669"/>
    <property type="project" value="UniProtKB-KW"/>
</dbReference>
<dbReference type="GO" id="GO:0019843">
    <property type="term" value="F:rRNA binding"/>
    <property type="evidence" value="ECO:0007669"/>
    <property type="project" value="UniProtKB-UniRule"/>
</dbReference>
<dbReference type="GO" id="GO:0003735">
    <property type="term" value="F:structural constituent of ribosome"/>
    <property type="evidence" value="ECO:0007669"/>
    <property type="project" value="InterPro"/>
</dbReference>
<dbReference type="GO" id="GO:0006412">
    <property type="term" value="P:translation"/>
    <property type="evidence" value="ECO:0007669"/>
    <property type="project" value="UniProtKB-UniRule"/>
</dbReference>
<dbReference type="CDD" id="cd06089">
    <property type="entry name" value="KOW_RPL26"/>
    <property type="match status" value="1"/>
</dbReference>
<dbReference type="FunFam" id="2.30.30.30:FF:000004">
    <property type="entry name" value="50S ribosomal protein L24"/>
    <property type="match status" value="1"/>
</dbReference>
<dbReference type="Gene3D" id="2.30.30.30">
    <property type="match status" value="1"/>
</dbReference>
<dbReference type="HAMAP" id="MF_01326_B">
    <property type="entry name" value="Ribosomal_uL24_B"/>
    <property type="match status" value="1"/>
</dbReference>
<dbReference type="InterPro" id="IPR005824">
    <property type="entry name" value="KOW"/>
</dbReference>
<dbReference type="InterPro" id="IPR014722">
    <property type="entry name" value="Rib_uL2_dom2"/>
</dbReference>
<dbReference type="InterPro" id="IPR003256">
    <property type="entry name" value="Ribosomal_uL24"/>
</dbReference>
<dbReference type="InterPro" id="IPR005825">
    <property type="entry name" value="Ribosomal_uL24_CS"/>
</dbReference>
<dbReference type="InterPro" id="IPR041988">
    <property type="entry name" value="Ribosomal_uL24_KOW"/>
</dbReference>
<dbReference type="InterPro" id="IPR008991">
    <property type="entry name" value="Translation_prot_SH3-like_sf"/>
</dbReference>
<dbReference type="NCBIfam" id="TIGR01079">
    <property type="entry name" value="rplX_bact"/>
    <property type="match status" value="1"/>
</dbReference>
<dbReference type="PANTHER" id="PTHR12903">
    <property type="entry name" value="MITOCHONDRIAL RIBOSOMAL PROTEIN L24"/>
    <property type="match status" value="1"/>
</dbReference>
<dbReference type="Pfam" id="PF00467">
    <property type="entry name" value="KOW"/>
    <property type="match status" value="1"/>
</dbReference>
<dbReference type="Pfam" id="PF17136">
    <property type="entry name" value="ribosomal_L24"/>
    <property type="match status" value="1"/>
</dbReference>
<dbReference type="SMART" id="SM00739">
    <property type="entry name" value="KOW"/>
    <property type="match status" value="1"/>
</dbReference>
<dbReference type="SUPFAM" id="SSF50104">
    <property type="entry name" value="Translation proteins SH3-like domain"/>
    <property type="match status" value="1"/>
</dbReference>
<dbReference type="PROSITE" id="PS01108">
    <property type="entry name" value="RIBOSOMAL_L24"/>
    <property type="match status" value="1"/>
</dbReference>